<name>HTF_NAUCI</name>
<dbReference type="PIR" id="A26381">
    <property type="entry name" value="A26381"/>
</dbReference>
<dbReference type="GO" id="GO:0005576">
    <property type="term" value="C:extracellular region"/>
    <property type="evidence" value="ECO:0007669"/>
    <property type="project" value="UniProtKB-SubCell"/>
</dbReference>
<dbReference type="GO" id="GO:0005179">
    <property type="term" value="F:hormone activity"/>
    <property type="evidence" value="ECO:0007669"/>
    <property type="project" value="UniProtKB-KW"/>
</dbReference>
<dbReference type="GO" id="GO:0007218">
    <property type="term" value="P:neuropeptide signaling pathway"/>
    <property type="evidence" value="ECO:0007669"/>
    <property type="project" value="UniProtKB-KW"/>
</dbReference>
<dbReference type="InterPro" id="IPR002047">
    <property type="entry name" value="Adipokinetic_hormone_CS"/>
</dbReference>
<dbReference type="PROSITE" id="PS00256">
    <property type="entry name" value="AKH"/>
    <property type="match status" value="1"/>
</dbReference>
<protein>
    <recommendedName>
        <fullName>Hypertrehalosaemic hormone</fullName>
        <shortName>HTH</shortName>
    </recommendedName>
    <alternativeName>
        <fullName>Hypertrehalosaemic neuropeptide</fullName>
    </alternativeName>
</protein>
<accession>P84218</accession>
<accession>P10939</accession>
<proteinExistence type="evidence at protein level"/>
<organism>
    <name type="scientific">Nauphoeta cinerea</name>
    <name type="common">Cinereous cockroach</name>
    <name type="synonym">Gray cockroach</name>
    <dbReference type="NCBI Taxonomy" id="6990"/>
    <lineage>
        <taxon>Eukaryota</taxon>
        <taxon>Metazoa</taxon>
        <taxon>Ecdysozoa</taxon>
        <taxon>Arthropoda</taxon>
        <taxon>Hexapoda</taxon>
        <taxon>Insecta</taxon>
        <taxon>Pterygota</taxon>
        <taxon>Neoptera</taxon>
        <taxon>Polyneoptera</taxon>
        <taxon>Dictyoptera</taxon>
        <taxon>Blattodea</taxon>
        <taxon>Blaberoidea</taxon>
        <taxon>Blaberidae</taxon>
        <taxon>Oxyhaloinae</taxon>
        <taxon>Nauphoeta</taxon>
    </lineage>
</organism>
<keyword id="KW-0027">Amidation</keyword>
<keyword id="KW-0903">Direct protein sequencing</keyword>
<keyword id="KW-0372">Hormone</keyword>
<keyword id="KW-0527">Neuropeptide</keyword>
<keyword id="KW-0873">Pyrrolidone carboxylic acid</keyword>
<keyword id="KW-0964">Secreted</keyword>
<sequence length="10" mass="1092">QVNFSPGWGT</sequence>
<feature type="peptide" id="PRO_0000043436" description="Hypertrehalosaemic hormone">
    <location>
        <begin position="1"/>
        <end position="10"/>
    </location>
</feature>
<feature type="modified residue" description="Pyrrolidone carboxylic acid" evidence="1">
    <location>
        <position position="1"/>
    </location>
</feature>
<feature type="modified residue" description="Threonine amide" evidence="1">
    <location>
        <position position="10"/>
    </location>
</feature>
<comment type="function">
    <text>Hypertrehalosaemic factors are neuropeptides that elevate the level of trehalose in the hemolymph (trehalose is the major carbohydrate in the hemolymph of insects).</text>
</comment>
<comment type="subcellular location">
    <subcellularLocation>
        <location>Secreted</location>
    </subcellularLocation>
</comment>
<comment type="similarity">
    <text evidence="2">Belongs to the AKH/HRTH/RPCH family.</text>
</comment>
<reference key="1">
    <citation type="journal article" date="1986" name="Biochem. Biophys. Res. Commun.">
        <title>Amino acid sequence of a hypertrehalosaemic neuropeptide from the corpus cardiacum of the cockroach, Nauphoeta cinerea.</title>
        <authorList>
            <person name="Gaede G."/>
            <person name="Rinehart K.L. Jr."/>
        </authorList>
    </citation>
    <scope>PROTEIN SEQUENCE</scope>
    <scope>PYROGLUTAMATE FORMATION AT GLN-1</scope>
    <scope>AMIDATION AT THR-10</scope>
    <source>
        <tissue>Corpora cardiaca</tissue>
    </source>
</reference>
<evidence type="ECO:0000269" key="1">
    <source>
    </source>
</evidence>
<evidence type="ECO:0000305" key="2"/>